<organism>
    <name type="scientific">Anaeromyxobacter sp. (strain K)</name>
    <dbReference type="NCBI Taxonomy" id="447217"/>
    <lineage>
        <taxon>Bacteria</taxon>
        <taxon>Pseudomonadati</taxon>
        <taxon>Myxococcota</taxon>
        <taxon>Myxococcia</taxon>
        <taxon>Myxococcales</taxon>
        <taxon>Cystobacterineae</taxon>
        <taxon>Anaeromyxobacteraceae</taxon>
        <taxon>Anaeromyxobacter</taxon>
    </lineage>
</organism>
<sequence length="1394" mass="154659">MKDIFNFFEKPKDPLSFSAIRISLASPDKIRQWSHGEVKKPETINYRTFKPERDGLFCAKIFGPVKDYECNCGKYKRMKHRGVVCEKCGVEVIQSKVRRERLGHITLATPVAHIWFLKSLPSRIGNLLDITLKDLEKVLYCESYIVIDPKETTFQRGELLSEDRYQKALDEFGDDAFSAGMGGEAVLGLLRGVGPASKEHGEGIPGLANELRAEMKEATSDAKRKKIAKRLKVVEAFVASGNKPEWMMLEVIPVIPPDLRPLVPLDGGRFATSDLNDLYRRVINRNNRLKRLQELNAPDIIIRNEKRMLQEAVDALFDNGRRGKTITGPNKRPLKSLSDMLKGKQGRFRQNLLGKRVDYSGRSVIVVGPELKLHQCGLPKIMALELFKPFIYNKLEEKGYVTTIKSAKKMVEKERPEVWDILDEVIREHPVLLNRAPTLHRLGIQAFEPVLIEGKAIQLHPLVCTAFNADFDGDQMAVHVPLSIEAQMEARVLMMSTNNILSPAHGKPIIVPSQDIVLGIYYMTRERAFARGEGKVFASPEEVRAAYDQGEVDLQAKVWVRMDGKRVETTVGRVLLYDIVPRRLSFESINKVMDKKQLQGLIDLTYRLCGEKETVLLADRVRSMGYGNATRAGISIALDNMVIPRKKVDLLERATREVDDIQAQYTEGLITIGERYNKVIDIWAQVTEEVAQEMMGEIGTETAVGTGKDGKREERRQPSFNPIYIMADSGARGSAQQIRQLAGMRGLMAKPSGEIIETPITANFREGLNVLQYFISTHGARKGLADTALKTANSGYLTRRLVDVAQDAIITEYDCGAMDGITLGALVEGGEIIEPMGERILGRVALDDMLDPFSGNVLVKANEEIDEGKVKLIENAGIDKVKIRSVLTCQARRGICVECYGRDLARGRKVNIGEAVGVIAAQSIGEPGTQLTMRTFHIGGAASRRAEQSTIENRNAGLIKFNNVSVAKKRDGTLIVMNRNGEIIVTDDQGRERERYGVVYGAKLLVREGQKVEANQLLAEWDPYSMPIITEVAGRVKYGDLVDGVTISEQVDEITGLARKAVIASKDPDARPRISIKDEEGRTKKLANSDADARYMLPEGANLVVNDGDEVDAGDVIAKMPRETTKTKDITGGLPRVAELFEARKPKEHAVISEIDGVVAFGKDTKGKRKVVITPEVDSKLRPDLAKEYLIGKGKHISVHTGDRVRAGEALMDGAANPHDILRVLGEKELARWLVDEVQEVYRLQGVKINDKHIETIVRQMLRRVRIVDVGDTEFLADEQVEKFAFEEENERVLKAGGRAAQGEPLLLGITKASLSTESFISASSFQETTKVLTEAAISGKVDYLRGLKENVIMGRLVPAGTGLGAYKHLDIEVETPVDAVEEAEEALAVGAEE</sequence>
<feature type="chain" id="PRO_0000353288" description="DNA-directed RNA polymerase subunit beta'">
    <location>
        <begin position="1"/>
        <end position="1394"/>
    </location>
</feature>
<feature type="binding site" evidence="1">
    <location>
        <position position="70"/>
    </location>
    <ligand>
        <name>Zn(2+)</name>
        <dbReference type="ChEBI" id="CHEBI:29105"/>
        <label>1</label>
    </ligand>
</feature>
<feature type="binding site" evidence="1">
    <location>
        <position position="72"/>
    </location>
    <ligand>
        <name>Zn(2+)</name>
        <dbReference type="ChEBI" id="CHEBI:29105"/>
        <label>1</label>
    </ligand>
</feature>
<feature type="binding site" evidence="1">
    <location>
        <position position="85"/>
    </location>
    <ligand>
        <name>Zn(2+)</name>
        <dbReference type="ChEBI" id="CHEBI:29105"/>
        <label>1</label>
    </ligand>
</feature>
<feature type="binding site" evidence="1">
    <location>
        <position position="88"/>
    </location>
    <ligand>
        <name>Zn(2+)</name>
        <dbReference type="ChEBI" id="CHEBI:29105"/>
        <label>1</label>
    </ligand>
</feature>
<feature type="binding site" evidence="1">
    <location>
        <position position="470"/>
    </location>
    <ligand>
        <name>Mg(2+)</name>
        <dbReference type="ChEBI" id="CHEBI:18420"/>
    </ligand>
</feature>
<feature type="binding site" evidence="1">
    <location>
        <position position="472"/>
    </location>
    <ligand>
        <name>Mg(2+)</name>
        <dbReference type="ChEBI" id="CHEBI:18420"/>
    </ligand>
</feature>
<feature type="binding site" evidence="1">
    <location>
        <position position="474"/>
    </location>
    <ligand>
        <name>Mg(2+)</name>
        <dbReference type="ChEBI" id="CHEBI:18420"/>
    </ligand>
</feature>
<feature type="binding site" evidence="1">
    <location>
        <position position="815"/>
    </location>
    <ligand>
        <name>Zn(2+)</name>
        <dbReference type="ChEBI" id="CHEBI:29105"/>
        <label>2</label>
    </ligand>
</feature>
<feature type="binding site" evidence="1">
    <location>
        <position position="889"/>
    </location>
    <ligand>
        <name>Zn(2+)</name>
        <dbReference type="ChEBI" id="CHEBI:29105"/>
        <label>2</label>
    </ligand>
</feature>
<feature type="binding site" evidence="1">
    <location>
        <position position="896"/>
    </location>
    <ligand>
        <name>Zn(2+)</name>
        <dbReference type="ChEBI" id="CHEBI:29105"/>
        <label>2</label>
    </ligand>
</feature>
<feature type="binding site" evidence="1">
    <location>
        <position position="899"/>
    </location>
    <ligand>
        <name>Zn(2+)</name>
        <dbReference type="ChEBI" id="CHEBI:29105"/>
        <label>2</label>
    </ligand>
</feature>
<accession>B4UDT1</accession>
<name>RPOC_ANASK</name>
<gene>
    <name evidence="1" type="primary">rpoC</name>
    <name type="ordered locus">AnaeK_2270</name>
</gene>
<evidence type="ECO:0000255" key="1">
    <source>
        <dbReference type="HAMAP-Rule" id="MF_01322"/>
    </source>
</evidence>
<dbReference type="EC" id="2.7.7.6" evidence="1"/>
<dbReference type="EMBL" id="CP001131">
    <property type="protein sequence ID" value="ACG73497.1"/>
    <property type="molecule type" value="Genomic_DNA"/>
</dbReference>
<dbReference type="RefSeq" id="WP_012526294.1">
    <property type="nucleotide sequence ID" value="NC_011145.1"/>
</dbReference>
<dbReference type="SMR" id="B4UDT1"/>
<dbReference type="KEGG" id="ank:AnaeK_2270"/>
<dbReference type="HOGENOM" id="CLU_000524_3_1_7"/>
<dbReference type="OrthoDB" id="9815296at2"/>
<dbReference type="Proteomes" id="UP000001871">
    <property type="component" value="Chromosome"/>
</dbReference>
<dbReference type="GO" id="GO:0000428">
    <property type="term" value="C:DNA-directed RNA polymerase complex"/>
    <property type="evidence" value="ECO:0007669"/>
    <property type="project" value="UniProtKB-KW"/>
</dbReference>
<dbReference type="GO" id="GO:0003677">
    <property type="term" value="F:DNA binding"/>
    <property type="evidence" value="ECO:0007669"/>
    <property type="project" value="UniProtKB-UniRule"/>
</dbReference>
<dbReference type="GO" id="GO:0003899">
    <property type="term" value="F:DNA-directed RNA polymerase activity"/>
    <property type="evidence" value="ECO:0007669"/>
    <property type="project" value="UniProtKB-UniRule"/>
</dbReference>
<dbReference type="GO" id="GO:0000287">
    <property type="term" value="F:magnesium ion binding"/>
    <property type="evidence" value="ECO:0007669"/>
    <property type="project" value="UniProtKB-UniRule"/>
</dbReference>
<dbReference type="GO" id="GO:0008270">
    <property type="term" value="F:zinc ion binding"/>
    <property type="evidence" value="ECO:0007669"/>
    <property type="project" value="UniProtKB-UniRule"/>
</dbReference>
<dbReference type="GO" id="GO:0006351">
    <property type="term" value="P:DNA-templated transcription"/>
    <property type="evidence" value="ECO:0007669"/>
    <property type="project" value="UniProtKB-UniRule"/>
</dbReference>
<dbReference type="CDD" id="cd02655">
    <property type="entry name" value="RNAP_beta'_C"/>
    <property type="match status" value="1"/>
</dbReference>
<dbReference type="CDD" id="cd01609">
    <property type="entry name" value="RNAP_beta'_N"/>
    <property type="match status" value="1"/>
</dbReference>
<dbReference type="FunFam" id="1.10.132.30:FF:000003">
    <property type="entry name" value="DNA-directed RNA polymerase subunit beta"/>
    <property type="match status" value="1"/>
</dbReference>
<dbReference type="FunFam" id="1.10.40.90:FF:000001">
    <property type="entry name" value="DNA-directed RNA polymerase subunit beta"/>
    <property type="match status" value="1"/>
</dbReference>
<dbReference type="Gene3D" id="1.10.132.30">
    <property type="match status" value="1"/>
</dbReference>
<dbReference type="Gene3D" id="1.10.150.390">
    <property type="match status" value="1"/>
</dbReference>
<dbReference type="Gene3D" id="1.10.1790.20">
    <property type="match status" value="1"/>
</dbReference>
<dbReference type="Gene3D" id="1.10.40.90">
    <property type="match status" value="1"/>
</dbReference>
<dbReference type="Gene3D" id="2.40.40.20">
    <property type="match status" value="1"/>
</dbReference>
<dbReference type="Gene3D" id="2.40.50.100">
    <property type="match status" value="3"/>
</dbReference>
<dbReference type="Gene3D" id="4.10.860.120">
    <property type="entry name" value="RNA polymerase II, clamp domain"/>
    <property type="match status" value="1"/>
</dbReference>
<dbReference type="Gene3D" id="1.10.274.100">
    <property type="entry name" value="RNA polymerase Rpb1, domain 3"/>
    <property type="match status" value="2"/>
</dbReference>
<dbReference type="HAMAP" id="MF_01322">
    <property type="entry name" value="RNApol_bact_RpoC"/>
    <property type="match status" value="1"/>
</dbReference>
<dbReference type="InterPro" id="IPR045867">
    <property type="entry name" value="DNA-dir_RpoC_beta_prime"/>
</dbReference>
<dbReference type="InterPro" id="IPR012754">
    <property type="entry name" value="DNA-dir_RpoC_beta_prime_bact"/>
</dbReference>
<dbReference type="InterPro" id="IPR000722">
    <property type="entry name" value="RNA_pol_asu"/>
</dbReference>
<dbReference type="InterPro" id="IPR006592">
    <property type="entry name" value="RNA_pol_N"/>
</dbReference>
<dbReference type="InterPro" id="IPR007080">
    <property type="entry name" value="RNA_pol_Rpb1_1"/>
</dbReference>
<dbReference type="InterPro" id="IPR007066">
    <property type="entry name" value="RNA_pol_Rpb1_3"/>
</dbReference>
<dbReference type="InterPro" id="IPR042102">
    <property type="entry name" value="RNA_pol_Rpb1_3_sf"/>
</dbReference>
<dbReference type="InterPro" id="IPR007083">
    <property type="entry name" value="RNA_pol_Rpb1_4"/>
</dbReference>
<dbReference type="InterPro" id="IPR007081">
    <property type="entry name" value="RNA_pol_Rpb1_5"/>
</dbReference>
<dbReference type="InterPro" id="IPR044893">
    <property type="entry name" value="RNA_pol_Rpb1_clamp_domain"/>
</dbReference>
<dbReference type="InterPro" id="IPR038120">
    <property type="entry name" value="Rpb1_funnel_sf"/>
</dbReference>
<dbReference type="NCBIfam" id="TIGR02386">
    <property type="entry name" value="rpoC_TIGR"/>
    <property type="match status" value="1"/>
</dbReference>
<dbReference type="PANTHER" id="PTHR19376">
    <property type="entry name" value="DNA-DIRECTED RNA POLYMERASE"/>
    <property type="match status" value="1"/>
</dbReference>
<dbReference type="PANTHER" id="PTHR19376:SF54">
    <property type="entry name" value="DNA-DIRECTED RNA POLYMERASE SUBUNIT BETA"/>
    <property type="match status" value="1"/>
</dbReference>
<dbReference type="Pfam" id="PF04997">
    <property type="entry name" value="RNA_pol_Rpb1_1"/>
    <property type="match status" value="1"/>
</dbReference>
<dbReference type="Pfam" id="PF00623">
    <property type="entry name" value="RNA_pol_Rpb1_2"/>
    <property type="match status" value="1"/>
</dbReference>
<dbReference type="Pfam" id="PF04983">
    <property type="entry name" value="RNA_pol_Rpb1_3"/>
    <property type="match status" value="1"/>
</dbReference>
<dbReference type="Pfam" id="PF05000">
    <property type="entry name" value="RNA_pol_Rpb1_4"/>
    <property type="match status" value="1"/>
</dbReference>
<dbReference type="Pfam" id="PF04998">
    <property type="entry name" value="RNA_pol_Rpb1_5"/>
    <property type="match status" value="1"/>
</dbReference>
<dbReference type="SMART" id="SM00663">
    <property type="entry name" value="RPOLA_N"/>
    <property type="match status" value="1"/>
</dbReference>
<dbReference type="SUPFAM" id="SSF64484">
    <property type="entry name" value="beta and beta-prime subunits of DNA dependent RNA-polymerase"/>
    <property type="match status" value="1"/>
</dbReference>
<reference key="1">
    <citation type="submission" date="2008-08" db="EMBL/GenBank/DDBJ databases">
        <title>Complete sequence of Anaeromyxobacter sp. K.</title>
        <authorList>
            <consortium name="US DOE Joint Genome Institute"/>
            <person name="Lucas S."/>
            <person name="Copeland A."/>
            <person name="Lapidus A."/>
            <person name="Glavina del Rio T."/>
            <person name="Dalin E."/>
            <person name="Tice H."/>
            <person name="Bruce D."/>
            <person name="Goodwin L."/>
            <person name="Pitluck S."/>
            <person name="Saunders E."/>
            <person name="Brettin T."/>
            <person name="Detter J.C."/>
            <person name="Han C."/>
            <person name="Larimer F."/>
            <person name="Land M."/>
            <person name="Hauser L."/>
            <person name="Kyrpides N."/>
            <person name="Ovchinnikiva G."/>
            <person name="Beliaev A."/>
        </authorList>
    </citation>
    <scope>NUCLEOTIDE SEQUENCE [LARGE SCALE GENOMIC DNA]</scope>
    <source>
        <strain>K</strain>
    </source>
</reference>
<protein>
    <recommendedName>
        <fullName evidence="1">DNA-directed RNA polymerase subunit beta'</fullName>
        <shortName evidence="1">RNAP subunit beta'</shortName>
        <ecNumber evidence="1">2.7.7.6</ecNumber>
    </recommendedName>
    <alternativeName>
        <fullName evidence="1">RNA polymerase subunit beta'</fullName>
    </alternativeName>
    <alternativeName>
        <fullName evidence="1">Transcriptase subunit beta'</fullName>
    </alternativeName>
</protein>
<keyword id="KW-0240">DNA-directed RNA polymerase</keyword>
<keyword id="KW-0460">Magnesium</keyword>
<keyword id="KW-0479">Metal-binding</keyword>
<keyword id="KW-0548">Nucleotidyltransferase</keyword>
<keyword id="KW-0804">Transcription</keyword>
<keyword id="KW-0808">Transferase</keyword>
<keyword id="KW-0862">Zinc</keyword>
<comment type="function">
    <text evidence="1">DNA-dependent RNA polymerase catalyzes the transcription of DNA into RNA using the four ribonucleoside triphosphates as substrates.</text>
</comment>
<comment type="catalytic activity">
    <reaction evidence="1">
        <text>RNA(n) + a ribonucleoside 5'-triphosphate = RNA(n+1) + diphosphate</text>
        <dbReference type="Rhea" id="RHEA:21248"/>
        <dbReference type="Rhea" id="RHEA-COMP:14527"/>
        <dbReference type="Rhea" id="RHEA-COMP:17342"/>
        <dbReference type="ChEBI" id="CHEBI:33019"/>
        <dbReference type="ChEBI" id="CHEBI:61557"/>
        <dbReference type="ChEBI" id="CHEBI:140395"/>
        <dbReference type="EC" id="2.7.7.6"/>
    </reaction>
</comment>
<comment type="cofactor">
    <cofactor evidence="1">
        <name>Mg(2+)</name>
        <dbReference type="ChEBI" id="CHEBI:18420"/>
    </cofactor>
    <text evidence="1">Binds 1 Mg(2+) ion per subunit.</text>
</comment>
<comment type="cofactor">
    <cofactor evidence="1">
        <name>Zn(2+)</name>
        <dbReference type="ChEBI" id="CHEBI:29105"/>
    </cofactor>
    <text evidence="1">Binds 2 Zn(2+) ions per subunit.</text>
</comment>
<comment type="subunit">
    <text evidence="1">The RNAP catalytic core consists of 2 alpha, 1 beta, 1 beta' and 1 omega subunit. When a sigma factor is associated with the core the holoenzyme is formed, which can initiate transcription.</text>
</comment>
<comment type="similarity">
    <text evidence="1">Belongs to the RNA polymerase beta' chain family.</text>
</comment>
<proteinExistence type="inferred from homology"/>